<keyword id="KW-0285">Flavoprotein</keyword>
<keyword id="KW-0288">FMN</keyword>
<keyword id="KW-0503">Monooxygenase</keyword>
<keyword id="KW-0521">NADP</keyword>
<keyword id="KW-0560">Oxidoreductase</keyword>
<reference key="1">
    <citation type="journal article" date="2008" name="J. Bacteriol.">
        <title>The pangenome structure of Escherichia coli: comparative genomic analysis of E. coli commensal and pathogenic isolates.</title>
        <authorList>
            <person name="Rasko D.A."/>
            <person name="Rosovitz M.J."/>
            <person name="Myers G.S.A."/>
            <person name="Mongodin E.F."/>
            <person name="Fricke W.F."/>
            <person name="Gajer P."/>
            <person name="Crabtree J."/>
            <person name="Sebaihia M."/>
            <person name="Thomson N.R."/>
            <person name="Chaudhuri R."/>
            <person name="Henderson I.R."/>
            <person name="Sperandio V."/>
            <person name="Ravel J."/>
        </authorList>
    </citation>
    <scope>NUCLEOTIDE SEQUENCE [LARGE SCALE GENOMIC DNA]</scope>
    <source>
        <strain>HS</strain>
    </source>
</reference>
<proteinExistence type="inferred from homology"/>
<comment type="function">
    <text evidence="1">Catalyzes the pyrimidine ring opening between N-3 and C-4 by an unusual flavin hydroperoxide-catalyzed mechanism, adding oxygen atoms in the process to yield ureidoacrylate peracid, that immediately reacts with FMN forming ureidoacrylate and FMN-N(5)-oxide. The FMN-N(5)-oxide reacts spontaneously with NADH to produce FMN. Requires the flavin reductase RutF to regenerate FMN in vivo.</text>
</comment>
<comment type="catalytic activity">
    <reaction evidence="1">
        <text>uracil + FMNH2 + NADH + O2 = (Z)-3-ureidoacrylate + FMN + NAD(+) + H2O + H(+)</text>
        <dbReference type="Rhea" id="RHEA:31587"/>
        <dbReference type="ChEBI" id="CHEBI:15377"/>
        <dbReference type="ChEBI" id="CHEBI:15378"/>
        <dbReference type="ChEBI" id="CHEBI:15379"/>
        <dbReference type="ChEBI" id="CHEBI:17568"/>
        <dbReference type="ChEBI" id="CHEBI:57540"/>
        <dbReference type="ChEBI" id="CHEBI:57618"/>
        <dbReference type="ChEBI" id="CHEBI:57945"/>
        <dbReference type="ChEBI" id="CHEBI:58210"/>
        <dbReference type="ChEBI" id="CHEBI:59891"/>
        <dbReference type="EC" id="1.14.99.46"/>
    </reaction>
</comment>
<comment type="catalytic activity">
    <reaction evidence="1">
        <text>thymine + FMNH2 + NADH + O2 = (Z)-2-methylureidoacrylate + FMN + NAD(+) + H2O + H(+)</text>
        <dbReference type="Rhea" id="RHEA:31599"/>
        <dbReference type="ChEBI" id="CHEBI:15377"/>
        <dbReference type="ChEBI" id="CHEBI:15378"/>
        <dbReference type="ChEBI" id="CHEBI:15379"/>
        <dbReference type="ChEBI" id="CHEBI:17821"/>
        <dbReference type="ChEBI" id="CHEBI:57540"/>
        <dbReference type="ChEBI" id="CHEBI:57618"/>
        <dbReference type="ChEBI" id="CHEBI:57945"/>
        <dbReference type="ChEBI" id="CHEBI:58210"/>
        <dbReference type="ChEBI" id="CHEBI:143783"/>
        <dbReference type="EC" id="1.14.99.46"/>
    </reaction>
</comment>
<comment type="induction">
    <text evidence="1">Up-regulated by the nitrogen regulatory protein C (NtrC also called GlnG) and repressed by RutR.</text>
</comment>
<comment type="similarity">
    <text evidence="1">Belongs to the NtaA/SnaA/DszA monooxygenase family. RutA subfamily.</text>
</comment>
<gene>
    <name evidence="1" type="primary">rutA</name>
    <name type="ordered locus">EcHS_A1127</name>
</gene>
<feature type="chain" id="PRO_0000402623" description="Pyrimidine monooxygenase RutA">
    <location>
        <begin position="1"/>
        <end position="393"/>
    </location>
</feature>
<feature type="binding site" evidence="1">
    <location>
        <begin position="79"/>
        <end position="80"/>
    </location>
    <ligand>
        <name>FMN</name>
        <dbReference type="ChEBI" id="CHEBI:58210"/>
    </ligand>
</feature>
<feature type="binding site" evidence="1">
    <location>
        <position position="145"/>
    </location>
    <ligand>
        <name>FMN</name>
        <dbReference type="ChEBI" id="CHEBI:58210"/>
    </ligand>
</feature>
<feature type="binding site" evidence="1">
    <location>
        <position position="154"/>
    </location>
    <ligand>
        <name>FMN</name>
        <dbReference type="ChEBI" id="CHEBI:58210"/>
    </ligand>
</feature>
<feature type="binding site" evidence="1">
    <location>
        <begin position="170"/>
        <end position="171"/>
    </location>
    <ligand>
        <name>FMN</name>
        <dbReference type="ChEBI" id="CHEBI:58210"/>
    </ligand>
</feature>
<feature type="binding site" evidence="1">
    <location>
        <position position="220"/>
    </location>
    <ligand>
        <name>FMN</name>
        <dbReference type="ChEBI" id="CHEBI:58210"/>
    </ligand>
</feature>
<organism>
    <name type="scientific">Escherichia coli O9:H4 (strain HS)</name>
    <dbReference type="NCBI Taxonomy" id="331112"/>
    <lineage>
        <taxon>Bacteria</taxon>
        <taxon>Pseudomonadati</taxon>
        <taxon>Pseudomonadota</taxon>
        <taxon>Gammaproteobacteria</taxon>
        <taxon>Enterobacterales</taxon>
        <taxon>Enterobacteriaceae</taxon>
        <taxon>Escherichia</taxon>
    </lineage>
</organism>
<dbReference type="EC" id="1.14.99.46" evidence="1"/>
<dbReference type="EMBL" id="CP000802">
    <property type="protein sequence ID" value="ABV05471.1"/>
    <property type="molecule type" value="Genomic_DNA"/>
</dbReference>
<dbReference type="SMR" id="A7ZYW7"/>
<dbReference type="KEGG" id="ecx:EcHS_A1127"/>
<dbReference type="HOGENOM" id="CLU_027853_1_1_6"/>
<dbReference type="GO" id="GO:0008726">
    <property type="term" value="F:alkanesulfonate monooxygenase activity"/>
    <property type="evidence" value="ECO:0007669"/>
    <property type="project" value="TreeGrafter"/>
</dbReference>
<dbReference type="GO" id="GO:0052614">
    <property type="term" value="F:uracil oxygenase activity"/>
    <property type="evidence" value="ECO:0007669"/>
    <property type="project" value="UniProtKB-EC"/>
</dbReference>
<dbReference type="GO" id="GO:0046306">
    <property type="term" value="P:alkanesulfonate catabolic process"/>
    <property type="evidence" value="ECO:0007669"/>
    <property type="project" value="TreeGrafter"/>
</dbReference>
<dbReference type="GO" id="GO:0019740">
    <property type="term" value="P:nitrogen utilization"/>
    <property type="evidence" value="ECO:0007669"/>
    <property type="project" value="UniProtKB-UniRule"/>
</dbReference>
<dbReference type="GO" id="GO:0006212">
    <property type="term" value="P:uracil catabolic process"/>
    <property type="evidence" value="ECO:0007669"/>
    <property type="project" value="UniProtKB-UniRule"/>
</dbReference>
<dbReference type="CDD" id="cd01094">
    <property type="entry name" value="Alkanesulfonate_monoxygenase"/>
    <property type="match status" value="1"/>
</dbReference>
<dbReference type="FunFam" id="3.20.20.30:FF:000003">
    <property type="entry name" value="Pyrimidine monooxygenase RutA"/>
    <property type="match status" value="1"/>
</dbReference>
<dbReference type="Gene3D" id="3.20.20.30">
    <property type="entry name" value="Luciferase-like domain"/>
    <property type="match status" value="1"/>
</dbReference>
<dbReference type="HAMAP" id="MF_01699">
    <property type="entry name" value="RutA"/>
    <property type="match status" value="1"/>
</dbReference>
<dbReference type="InterPro" id="IPR011251">
    <property type="entry name" value="Luciferase-like_dom"/>
</dbReference>
<dbReference type="InterPro" id="IPR036661">
    <property type="entry name" value="Luciferase-like_sf"/>
</dbReference>
<dbReference type="InterPro" id="IPR019914">
    <property type="entry name" value="Pyrimidine_monooxygenase_RutA"/>
</dbReference>
<dbReference type="InterPro" id="IPR050172">
    <property type="entry name" value="SsuD_RutA_monooxygenase"/>
</dbReference>
<dbReference type="NCBIfam" id="TIGR03612">
    <property type="entry name" value="RutA"/>
    <property type="match status" value="1"/>
</dbReference>
<dbReference type="PANTHER" id="PTHR42847">
    <property type="entry name" value="ALKANESULFONATE MONOOXYGENASE"/>
    <property type="match status" value="1"/>
</dbReference>
<dbReference type="PANTHER" id="PTHR42847:SF4">
    <property type="entry name" value="ALKANESULFONATE MONOOXYGENASE-RELATED"/>
    <property type="match status" value="1"/>
</dbReference>
<dbReference type="Pfam" id="PF00296">
    <property type="entry name" value="Bac_luciferase"/>
    <property type="match status" value="1"/>
</dbReference>
<dbReference type="SUPFAM" id="SSF51679">
    <property type="entry name" value="Bacterial luciferase-like"/>
    <property type="match status" value="1"/>
</dbReference>
<evidence type="ECO:0000255" key="1">
    <source>
        <dbReference type="HAMAP-Rule" id="MF_01699"/>
    </source>
</evidence>
<accession>A7ZYW7</accession>
<sequence>MQTSHYAAEKDMQDAVPRLTFTLRDEERLMMKIGVFVPIGNNGWLISTHAPQYMPTFELNKAIVQKAEHYHFDFALSMIKLRGFGGKTEFWDHNLESFTLMAGLAAVTSRIQIYATAATLTLPPAIVARMAATIDSISGGRFGVNLVTGWQKPEYEQMGIWPGDDYFSRRYDYLTEYVQVLRDLWGTGKSDFKGDFFTMNDCRVSPQPSVPMKVICAGQSDAGMAFSAQYADFNFCFGKGVNTPTAFAPTAARMKQAAEQTGRDVGSYVLFMVIADETDDAARAKWEHYKAGADEEALSWLTEQSQKDTRSGTDTNVRQMADPTSAVNINMGTLVGSYASVARMLDEVASVPGAEGVLLTFDDFLSGIETFGERIQPLMQCRAHLPVLTQEVA</sequence>
<protein>
    <recommendedName>
        <fullName evidence="1">Pyrimidine monooxygenase RutA</fullName>
        <ecNumber evidence="1">1.14.99.46</ecNumber>
    </recommendedName>
</protein>
<name>RUTA_ECOHS</name>